<accession>Q27966</accession>
<accession>A5D7F3</accession>
<accession>Q28138</accession>
<feature type="chain" id="PRO_0000226048" description="Unconventional myosin-Ic">
    <location>
        <begin position="1"/>
        <end position="1063"/>
    </location>
</feature>
<feature type="domain" description="Myosin motor" evidence="7">
    <location>
        <begin position="47"/>
        <end position="731"/>
    </location>
</feature>
<feature type="domain" description="IQ 1" evidence="6">
    <location>
        <begin position="734"/>
        <end position="757"/>
    </location>
</feature>
<feature type="domain" description="IQ 2" evidence="6">
    <location>
        <begin position="758"/>
        <end position="786"/>
    </location>
</feature>
<feature type="domain" description="TH1" evidence="8">
    <location>
        <begin position="885"/>
        <end position="1059"/>
    </location>
</feature>
<feature type="region of interest" description="Actin-binding" evidence="7">
    <location>
        <begin position="608"/>
        <end position="630"/>
    </location>
</feature>
<feature type="binding site" evidence="1">
    <location>
        <position position="88"/>
    </location>
    <ligand>
        <name>ATP</name>
        <dbReference type="ChEBI" id="CHEBI:30616"/>
    </ligand>
</feature>
<feature type="binding site" evidence="1">
    <location>
        <position position="96"/>
    </location>
    <ligand>
        <name>ATP</name>
        <dbReference type="ChEBI" id="CHEBI:30616"/>
    </ligand>
</feature>
<feature type="binding site" evidence="1">
    <location>
        <begin position="139"/>
        <end position="148"/>
    </location>
    <ligand>
        <name>ATP</name>
        <dbReference type="ChEBI" id="CHEBI:30616"/>
    </ligand>
</feature>
<feature type="binding site" evidence="1">
    <location>
        <begin position="192"/>
        <end position="196"/>
    </location>
    <ligand>
        <name>ATP</name>
        <dbReference type="ChEBI" id="CHEBI:30616"/>
    </ligand>
</feature>
<feature type="modified residue" description="N6-methyllysine" evidence="2">
    <location>
        <position position="383"/>
    </location>
</feature>
<feature type="modified residue" description="Phosphoserine" evidence="2">
    <location>
        <position position="408"/>
    </location>
</feature>
<feature type="modified residue" description="N6-acetyllysine" evidence="5">
    <location>
        <position position="486"/>
    </location>
</feature>
<feature type="modified residue" description="Phosphoserine" evidence="3">
    <location>
        <position position="536"/>
    </location>
</feature>
<feature type="modified residue" description="Phosphoserine" evidence="3">
    <location>
        <position position="864"/>
    </location>
</feature>
<feature type="modified residue" description="Phosphoserine" evidence="3">
    <location>
        <position position="1041"/>
    </location>
</feature>
<feature type="splice variant" id="VSP_036860" description="In isoform 2." evidence="11">
    <location>
        <begin position="1"/>
        <end position="35"/>
    </location>
</feature>
<feature type="splice variant" id="VSP_036859" description="In isoform 3." evidence="12">
    <original>MALQVELIPTGEIIRVVHPHRPCKL</original>
    <variation>MRYRAS</variation>
    <location>
        <begin position="1"/>
        <end position="25"/>
    </location>
</feature>
<feature type="sequence conflict" description="In Ref. 4; CAA80476." evidence="13" ref="4">
    <original>A</original>
    <variation>C</variation>
    <location>
        <position position="42"/>
    </location>
</feature>
<feature type="sequence conflict" description="In Ref. 1; AAA17565." evidence="13" ref="1">
    <original>R</original>
    <variation>G</variation>
    <location>
        <position position="132"/>
    </location>
</feature>
<feature type="sequence conflict" description="In Ref. 4; CAA80476." evidence="13" ref="4">
    <original>H</original>
    <variation>N</variation>
    <location>
        <position position="355"/>
    </location>
</feature>
<feature type="sequence conflict" description="In Ref. 4; CAA80476." evidence="13" ref="4">
    <original>N</original>
    <variation>K</variation>
    <location>
        <position position="398"/>
    </location>
</feature>
<feature type="sequence conflict" description="In Ref. 1; AAA17565." evidence="13" ref="1">
    <original>D</original>
    <variation>G</variation>
    <location>
        <position position="421"/>
    </location>
</feature>
<feature type="sequence conflict" description="In Ref. 4; CAA80476." evidence="13" ref="4">
    <original>N</original>
    <variation>I</variation>
    <location>
        <position position="579"/>
    </location>
</feature>
<feature type="sequence conflict" description="In Ref. 4; CAA80476." evidence="13" ref="4">
    <original>C</original>
    <variation>F</variation>
    <location>
        <position position="585"/>
    </location>
</feature>
<feature type="sequence conflict" description="In Ref. 1; AAA17565." evidence="13" ref="1">
    <original>D</original>
    <variation>S</variation>
    <location>
        <position position="593"/>
    </location>
</feature>
<feature type="sequence conflict" description="In Ref. 1; AAA17565." evidence="13" ref="1">
    <original>P</original>
    <variation>R</variation>
    <location>
        <position position="690"/>
    </location>
</feature>
<feature type="sequence conflict" description="In Ref. 4; CAA80476." evidence="13" ref="4">
    <original>G</original>
    <variation>A</variation>
    <location>
        <position position="747"/>
    </location>
</feature>
<feature type="sequence conflict" description="In Ref. 4; CAA80476." evidence="13" ref="4">
    <original>V</original>
    <variation>L</variation>
    <location>
        <position position="757"/>
    </location>
</feature>
<feature type="modified residue" description="N-acetylmethionine" evidence="1">
    <location sequence="Q27966-2">
        <position position="1"/>
    </location>
</feature>
<evidence type="ECO:0000250" key="1"/>
<evidence type="ECO:0000250" key="2">
    <source>
        <dbReference type="UniProtKB" id="O00159"/>
    </source>
</evidence>
<evidence type="ECO:0000250" key="3">
    <source>
        <dbReference type="UniProtKB" id="Q63355"/>
    </source>
</evidence>
<evidence type="ECO:0000250" key="4">
    <source>
        <dbReference type="UniProtKB" id="Q92002"/>
    </source>
</evidence>
<evidence type="ECO:0000250" key="5">
    <source>
        <dbReference type="UniProtKB" id="Q9WTI7"/>
    </source>
</evidence>
<evidence type="ECO:0000255" key="6">
    <source>
        <dbReference type="PROSITE-ProRule" id="PRU00116"/>
    </source>
</evidence>
<evidence type="ECO:0000255" key="7">
    <source>
        <dbReference type="PROSITE-ProRule" id="PRU00782"/>
    </source>
</evidence>
<evidence type="ECO:0000255" key="8">
    <source>
        <dbReference type="PROSITE-ProRule" id="PRU01093"/>
    </source>
</evidence>
<evidence type="ECO:0000269" key="9">
    <source>
    </source>
</evidence>
<evidence type="ECO:0000269" key="10">
    <source>
    </source>
</evidence>
<evidence type="ECO:0000303" key="11">
    <source>
    </source>
</evidence>
<evidence type="ECO:0000303" key="12">
    <source ref="3"/>
</evidence>
<evidence type="ECO:0000305" key="13"/>
<protein>
    <recommendedName>
        <fullName>Unconventional myosin-Ic</fullName>
    </recommendedName>
    <alternativeName>
        <fullName>Myosin I beta</fullName>
        <shortName>MMI-beta</shortName>
        <shortName>MMIb</shortName>
    </alternativeName>
</protein>
<proteinExistence type="evidence at protein level"/>
<dbReference type="EMBL" id="U03420">
    <property type="protein sequence ID" value="AAA17565.1"/>
    <property type="molecule type" value="mRNA"/>
</dbReference>
<dbReference type="EMBL" id="BC140534">
    <property type="protein sequence ID" value="AAI40535.1"/>
    <property type="status" value="ALT_INIT"/>
    <property type="molecule type" value="mRNA"/>
</dbReference>
<dbReference type="EMBL" id="EG705719">
    <property type="status" value="NOT_ANNOTATED_CDS"/>
    <property type="molecule type" value="mRNA"/>
</dbReference>
<dbReference type="EMBL" id="Z22852">
    <property type="protein sequence ID" value="CAA80476.1"/>
    <property type="molecule type" value="mRNA"/>
</dbReference>
<dbReference type="PIR" id="S41749">
    <property type="entry name" value="S41749"/>
</dbReference>
<dbReference type="RefSeq" id="NP_776821.3">
    <molecule id="Q27966-1"/>
    <property type="nucleotide sequence ID" value="NM_174396.3"/>
</dbReference>
<dbReference type="RefSeq" id="XP_005220121.1">
    <molecule id="Q27966-3"/>
    <property type="nucleotide sequence ID" value="XM_005220064.2"/>
</dbReference>
<dbReference type="RefSeq" id="XP_005220122.1">
    <molecule id="Q27966-2"/>
    <property type="nucleotide sequence ID" value="XM_005220065.4"/>
</dbReference>
<dbReference type="SMR" id="Q27966"/>
<dbReference type="FunCoup" id="Q27966">
    <property type="interactions" value="1197"/>
</dbReference>
<dbReference type="STRING" id="9913.ENSBTAP00000029553"/>
<dbReference type="PaxDb" id="9913-ENSBTAP00000029554"/>
<dbReference type="PeptideAtlas" id="Q27966"/>
<dbReference type="Ensembl" id="ENSBTAT00000029554.6">
    <molecule id="Q27966-3"/>
    <property type="protein sequence ID" value="ENSBTAP00000029553.6"/>
    <property type="gene ID" value="ENSBTAG00000001332.7"/>
</dbReference>
<dbReference type="GeneID" id="281937"/>
<dbReference type="KEGG" id="bta:281937"/>
<dbReference type="CTD" id="4641"/>
<dbReference type="VEuPathDB" id="HostDB:ENSBTAG00000001332"/>
<dbReference type="eggNOG" id="KOG0164">
    <property type="taxonomic scope" value="Eukaryota"/>
</dbReference>
<dbReference type="GeneTree" id="ENSGT00940000157915"/>
<dbReference type="HOGENOM" id="CLU_000192_7_7_1"/>
<dbReference type="InParanoid" id="Q27966"/>
<dbReference type="OMA" id="KYQTFCT"/>
<dbReference type="OrthoDB" id="6108017at2759"/>
<dbReference type="TreeFam" id="TF312960"/>
<dbReference type="Reactome" id="R-BTA-2029482">
    <property type="pathway name" value="Regulation of actin dynamics for phagocytic cup formation"/>
</dbReference>
<dbReference type="Reactome" id="R-BTA-5250924">
    <property type="pathway name" value="B-WICH complex positively regulates rRNA expression"/>
</dbReference>
<dbReference type="Proteomes" id="UP000009136">
    <property type="component" value="Chromosome 19"/>
</dbReference>
<dbReference type="Bgee" id="ENSBTAG00000001332">
    <property type="expression patterns" value="Expressed in trachea and 107 other cell types or tissues"/>
</dbReference>
<dbReference type="GO" id="GO:0015629">
    <property type="term" value="C:actin cytoskeleton"/>
    <property type="evidence" value="ECO:0000318"/>
    <property type="project" value="GO_Central"/>
</dbReference>
<dbReference type="GO" id="GO:0005938">
    <property type="term" value="C:cell cortex"/>
    <property type="evidence" value="ECO:0007669"/>
    <property type="project" value="UniProtKB-SubCell"/>
</dbReference>
<dbReference type="GO" id="GO:0005737">
    <property type="term" value="C:cytoplasm"/>
    <property type="evidence" value="ECO:0000318"/>
    <property type="project" value="GO_Central"/>
</dbReference>
<dbReference type="GO" id="GO:0031410">
    <property type="term" value="C:cytoplasmic vesicle"/>
    <property type="evidence" value="ECO:0007669"/>
    <property type="project" value="UniProtKB-KW"/>
</dbReference>
<dbReference type="GO" id="GO:0005902">
    <property type="term" value="C:microvillus"/>
    <property type="evidence" value="ECO:0000318"/>
    <property type="project" value="GO_Central"/>
</dbReference>
<dbReference type="GO" id="GO:0016459">
    <property type="term" value="C:myosin complex"/>
    <property type="evidence" value="ECO:0007669"/>
    <property type="project" value="UniProtKB-KW"/>
</dbReference>
<dbReference type="GO" id="GO:0005730">
    <property type="term" value="C:nucleolus"/>
    <property type="evidence" value="ECO:0007669"/>
    <property type="project" value="UniProtKB-SubCell"/>
</dbReference>
<dbReference type="GO" id="GO:0005654">
    <property type="term" value="C:nucleoplasm"/>
    <property type="evidence" value="ECO:0007669"/>
    <property type="project" value="UniProtKB-SubCell"/>
</dbReference>
<dbReference type="GO" id="GO:0005886">
    <property type="term" value="C:plasma membrane"/>
    <property type="evidence" value="ECO:0000318"/>
    <property type="project" value="GO_Central"/>
</dbReference>
<dbReference type="GO" id="GO:0032587">
    <property type="term" value="C:ruffle membrane"/>
    <property type="evidence" value="ECO:0007669"/>
    <property type="project" value="UniProtKB-SubCell"/>
</dbReference>
<dbReference type="GO" id="GO:0060171">
    <property type="term" value="C:stereocilium membrane"/>
    <property type="evidence" value="ECO:0007669"/>
    <property type="project" value="UniProtKB-SubCell"/>
</dbReference>
<dbReference type="GO" id="GO:0051015">
    <property type="term" value="F:actin filament binding"/>
    <property type="evidence" value="ECO:0000318"/>
    <property type="project" value="GO_Central"/>
</dbReference>
<dbReference type="GO" id="GO:0005524">
    <property type="term" value="F:ATP binding"/>
    <property type="evidence" value="ECO:0007669"/>
    <property type="project" value="UniProtKB-KW"/>
</dbReference>
<dbReference type="GO" id="GO:0005516">
    <property type="term" value="F:calmodulin binding"/>
    <property type="evidence" value="ECO:0007669"/>
    <property type="project" value="UniProtKB-KW"/>
</dbReference>
<dbReference type="GO" id="GO:0000146">
    <property type="term" value="F:microfilament motor activity"/>
    <property type="evidence" value="ECO:0000318"/>
    <property type="project" value="GO_Central"/>
</dbReference>
<dbReference type="GO" id="GO:0007015">
    <property type="term" value="P:actin filament organization"/>
    <property type="evidence" value="ECO:0000318"/>
    <property type="project" value="GO_Central"/>
</dbReference>
<dbReference type="GO" id="GO:0030048">
    <property type="term" value="P:actin filament-based movement"/>
    <property type="evidence" value="ECO:0000318"/>
    <property type="project" value="GO_Central"/>
</dbReference>
<dbReference type="GO" id="GO:0006897">
    <property type="term" value="P:endocytosis"/>
    <property type="evidence" value="ECO:0000318"/>
    <property type="project" value="GO_Central"/>
</dbReference>
<dbReference type="CDD" id="cd23766">
    <property type="entry name" value="IQCG"/>
    <property type="match status" value="1"/>
</dbReference>
<dbReference type="CDD" id="cd01378">
    <property type="entry name" value="MYSc_Myo1"/>
    <property type="match status" value="1"/>
</dbReference>
<dbReference type="FunFam" id="1.10.10.820:FF:000001">
    <property type="entry name" value="Myosin heavy chain"/>
    <property type="match status" value="1"/>
</dbReference>
<dbReference type="FunFam" id="3.40.850.10:FF:000101">
    <property type="entry name" value="Slow myosin heavy chain 2"/>
    <property type="match status" value="1"/>
</dbReference>
<dbReference type="FunFam" id="1.20.58.530:FF:000004">
    <property type="entry name" value="Unconventional myosin ID"/>
    <property type="match status" value="1"/>
</dbReference>
<dbReference type="FunFam" id="1.20.5.190:FF:000017">
    <property type="entry name" value="unconventional myosin-Ic isoform X1"/>
    <property type="match status" value="1"/>
</dbReference>
<dbReference type="FunFam" id="1.20.120.720:FF:000013">
    <property type="entry name" value="unconventional myosin-Ic isoform X2"/>
    <property type="match status" value="1"/>
</dbReference>
<dbReference type="Gene3D" id="1.10.10.820">
    <property type="match status" value="1"/>
</dbReference>
<dbReference type="Gene3D" id="1.20.5.190">
    <property type="match status" value="1"/>
</dbReference>
<dbReference type="Gene3D" id="1.20.58.530">
    <property type="match status" value="1"/>
</dbReference>
<dbReference type="Gene3D" id="6.20.240.20">
    <property type="match status" value="1"/>
</dbReference>
<dbReference type="Gene3D" id="3.40.850.10">
    <property type="entry name" value="Kinesin motor domain"/>
    <property type="match status" value="1"/>
</dbReference>
<dbReference type="Gene3D" id="1.20.120.720">
    <property type="entry name" value="Myosin VI head, motor domain, U50 subdomain"/>
    <property type="match status" value="1"/>
</dbReference>
<dbReference type="InterPro" id="IPR000048">
    <property type="entry name" value="IQ_motif_EF-hand-BS"/>
</dbReference>
<dbReference type="InterPro" id="IPR036961">
    <property type="entry name" value="Kinesin_motor_dom_sf"/>
</dbReference>
<dbReference type="InterPro" id="IPR001609">
    <property type="entry name" value="Myosin_head_motor_dom-like"/>
</dbReference>
<dbReference type="InterPro" id="IPR010926">
    <property type="entry name" value="Myosin_TH1"/>
</dbReference>
<dbReference type="InterPro" id="IPR036072">
    <property type="entry name" value="MYSc_Myo1"/>
</dbReference>
<dbReference type="InterPro" id="IPR027417">
    <property type="entry name" value="P-loop_NTPase"/>
</dbReference>
<dbReference type="PANTHER" id="PTHR13140">
    <property type="entry name" value="MYOSIN"/>
    <property type="match status" value="1"/>
</dbReference>
<dbReference type="PANTHER" id="PTHR13140:SF255">
    <property type="entry name" value="UNCONVENTIONAL MYOSIN-IC"/>
    <property type="match status" value="1"/>
</dbReference>
<dbReference type="Pfam" id="PF00612">
    <property type="entry name" value="IQ"/>
    <property type="match status" value="2"/>
</dbReference>
<dbReference type="Pfam" id="PF00063">
    <property type="entry name" value="Myosin_head"/>
    <property type="match status" value="1"/>
</dbReference>
<dbReference type="Pfam" id="PF06017">
    <property type="entry name" value="Myosin_TH1"/>
    <property type="match status" value="1"/>
</dbReference>
<dbReference type="PRINTS" id="PR00193">
    <property type="entry name" value="MYOSINHEAVY"/>
</dbReference>
<dbReference type="SMART" id="SM00015">
    <property type="entry name" value="IQ"/>
    <property type="match status" value="2"/>
</dbReference>
<dbReference type="SMART" id="SM00242">
    <property type="entry name" value="MYSc"/>
    <property type="match status" value="1"/>
</dbReference>
<dbReference type="SUPFAM" id="SSF52540">
    <property type="entry name" value="P-loop containing nucleoside triphosphate hydrolases"/>
    <property type="match status" value="1"/>
</dbReference>
<dbReference type="PROSITE" id="PS50096">
    <property type="entry name" value="IQ"/>
    <property type="match status" value="2"/>
</dbReference>
<dbReference type="PROSITE" id="PS51456">
    <property type="entry name" value="MYOSIN_MOTOR"/>
    <property type="match status" value="1"/>
</dbReference>
<dbReference type="PROSITE" id="PS51757">
    <property type="entry name" value="TH1"/>
    <property type="match status" value="1"/>
</dbReference>
<sequence length="1063" mass="121936">MALQVELIPTGEIIRVVHPHRPCKLALGSDGVRVTMESALTARDRVGVQDFVLLENFTSEAAFIENLRRRFRENLIYTYIGPVLVSVNPYRDLQIYSRQHMERYRGVSFYEVPPHLFAVADTVYRALRTERRDQAVMISGESGAGKTEATKRLLQFYAETCPAPERGGAVRDRLLQSNPVLEAFGNAKTLRNDNSSRFGKYMDVQFDFKGAPVGGHILSYLLEKSRVVHQNHGERNFHIFYQLLEGGEEETLRRLGLERNPQSYLYLVKGQCAKVSSINDKSDWKVVRKALTVIDFTEDEVEDLLSIVASVLHLGNTHFAADEESNAQVTTENQLKYLTRLLGVEGSTLREALTHRKIIAKGEELLSPLNLEQAAYARDALAKAVYSRTFTWLVAKINRSLASKDAESPSWRSTTVLGLLDIYGFEVFQHNSFEQFCINYCNEKLQQLFIELTLKSEQEEYEAEGIAWEPVQYFNNKIICDLVEEKFKGIISILDEECLRPGEATDLTFLEKLEDTIKQHPHFLTHKLADQRTRKSLDRGEFRLLHYAGEVTYNVTGFLDKNNDLLFRNLKETMCSSENPILGQCFDRSELSDKKRPETVATQFKMSLLELVEILKSKEPAYVRCIKPNDSKQPGRFDEVLIRHQVKYLGLMENLRVRRAGFAYRRKYEAFLQRYKSLCPETWPTWTGRPQDGVTVLVRHLGYKPEEYKMGRTKIFIRFPKTLFATEDALEIRRQSLATKIQATWRGFHCRQKFLRVKRSAICIQSWWRGTLGRRKAAKRKWAAQTIRRLIQGFILRHAPRCPENAFFVDHVRTSFLLNLRRQLPRNILDTSWPTPPPALREASELLRELCRKNMVWKYCRSISPEWKQQLQQKAVASEIFKGKKDNYPQSVPRLFISTRLGADEINPRVLQALGSEPIQYAVPVVKYDRKGYKPRSRQLLLTPNAVVIVEDAKVKQRIEYTNLTGISVSSLSDSLFVLHVQREDNKQKGDVVLQSDHVIETLTKTALSADRVNNININQGSITFAGGPGRDGIIDFTPGSELLITKAKNGHLAVVAPRLNSR</sequence>
<name>MYO1C_BOVIN</name>
<organism>
    <name type="scientific">Bos taurus</name>
    <name type="common">Bovine</name>
    <dbReference type="NCBI Taxonomy" id="9913"/>
    <lineage>
        <taxon>Eukaryota</taxon>
        <taxon>Metazoa</taxon>
        <taxon>Chordata</taxon>
        <taxon>Craniata</taxon>
        <taxon>Vertebrata</taxon>
        <taxon>Euteleostomi</taxon>
        <taxon>Mammalia</taxon>
        <taxon>Eutheria</taxon>
        <taxon>Laurasiatheria</taxon>
        <taxon>Artiodactyla</taxon>
        <taxon>Ruminantia</taxon>
        <taxon>Pecora</taxon>
        <taxon>Bovidae</taxon>
        <taxon>Bovinae</taxon>
        <taxon>Bos</taxon>
    </lineage>
</organism>
<keyword id="KW-0007">Acetylation</keyword>
<keyword id="KW-0009">Actin-binding</keyword>
<keyword id="KW-0025">Alternative splicing</keyword>
<keyword id="KW-0067">ATP-binding</keyword>
<keyword id="KW-0112">Calmodulin-binding</keyword>
<keyword id="KW-1003">Cell membrane</keyword>
<keyword id="KW-0966">Cell projection</keyword>
<keyword id="KW-0963">Cytoplasm</keyword>
<keyword id="KW-0968">Cytoplasmic vesicle</keyword>
<keyword id="KW-0472">Membrane</keyword>
<keyword id="KW-0488">Methylation</keyword>
<keyword id="KW-0505">Motor protein</keyword>
<keyword id="KW-0518">Myosin</keyword>
<keyword id="KW-0547">Nucleotide-binding</keyword>
<keyword id="KW-0539">Nucleus</keyword>
<keyword id="KW-0597">Phosphoprotein</keyword>
<keyword id="KW-1185">Reference proteome</keyword>
<keyword id="KW-0677">Repeat</keyword>
<reference key="1">
    <citation type="journal article" date="1994" name="FEBS Lett.">
        <title>A novel myosin I from bovine adrenal gland.</title>
        <authorList>
            <person name="Zhu T."/>
            <person name="Ikebe M."/>
        </authorList>
    </citation>
    <scope>NUCLEOTIDE SEQUENCE [MRNA] (ISOFORM 2)</scope>
    <scope>INTERACTION WITH CALM</scope>
    <scope>TISSUE SPECIFICITY</scope>
    <source>
        <tissue>Adrenal gland</tissue>
    </source>
</reference>
<reference key="2">
    <citation type="submission" date="2007-04" db="EMBL/GenBank/DDBJ databases">
        <authorList>
            <consortium name="NIH - Mammalian Gene Collection (MGC) project"/>
        </authorList>
    </citation>
    <scope>NUCLEOTIDE SEQUENCE [LARGE SCALE MRNA] (ISOFORM 1)</scope>
    <source>
        <strain>Hereford</strain>
        <tissue>Fetal skin</tissue>
    </source>
</reference>
<reference key="3">
    <citation type="submission" date="2006-11" db="EMBL/GenBank/DDBJ databases">
        <title>NEIBank analysis of cow lens.</title>
        <authorList>
            <person name="Wistow G."/>
        </authorList>
    </citation>
    <scope>NUCLEOTIDE SEQUENCE [LARGE SCALE MRNA] OF 1-164 (ISOFORM 3)</scope>
    <source>
        <tissue>Lens</tissue>
    </source>
</reference>
<reference key="4">
    <citation type="journal article" date="1994" name="Proc. Natl. Acad. Sci. U.S.A.">
        <title>Domain Structure of a mammalian myosin I-beta.</title>
        <authorList>
            <person name="Reizes O."/>
            <person name="Barylko B."/>
            <person name="Li C."/>
            <person name="Suedhof T.C."/>
            <person name="Albenisi J.P."/>
        </authorList>
    </citation>
    <scope>NUCLEOTIDE SEQUENCE [MRNA] OF 26-1063 (ISOFORM 1/2)</scope>
    <scope>INTERACTION WITH CALM</scope>
    <source>
        <tissue>Brain</tissue>
    </source>
</reference>
<gene>
    <name type="primary">MYO1C</name>
</gene>
<comment type="function">
    <text evidence="5">Myosins are actin-based motor molecules with ATPase activity. Unconventional myosins serve in intracellular movements. Their highly divergent tails are presumed to bind to membranous compartments, which would be moved relative to actin filaments. Involved in glucose transporter recycling in response to insulin by regulating movement of intracellular GLUT4-containing vesicles to the plasma membrane. Component of the hair cell's (the sensory cells of the inner ear) adaptation-motor complex. Acts as a mediator of adaptation of mechanoelectrical transduction in stereocilia of vestibular hair cells. Binds phosphoinositides and links the actin cytoskeleton to cellular membranes (By similarity).</text>
</comment>
<comment type="function">
    <text evidence="5">Isoform 3 is involved in regulation of transcription. Associated with transcriptional active ribosomal genes. Appears to cooperate with the WICH chromatin-remodeling complex to facilitate transcription. Necessary for the formation of the first phosphodiester bond during transcription initiation.</text>
</comment>
<comment type="subunit">
    <text evidence="2 3 5 9 10">Interacts (via its IQ motifs) with CABP1 and CIB1; the interaction with CABP1 and CIB1 is calcium-dependent (By similarity). Interacts (via tail domain) with PLEKHB1 (via PH domain); the interaction is not affected by the presence or absence of calcium and CALM (By similarity). Interacts with POLR1A (By similarity). Interacts with POLR2A (By similarity). Component of the B-WICH complex, at least composed of SMARCA5/SNF2H, BAZ1B/WSTF, SF3B1, DEK, MYO1C, ERCC6, MYBBP1A and DDX21 (By similarity). Interacts (via its IQ motifs) with CALM; this precludes interaction with YWHAB (PubMed:8022785, PubMed:8313976). Interacts with YWHAB; this precludes interaction with CALM (By similarity). Interacts with RPS6 (By similarity). Interacts with actin (By similarity). Interacts with LLPH (By similarity). Interacts with GLUT4 (By similarity). Interacts (via its IQ motifs) with SH3BGRL3; the interaction is dependent on calcium and takes place at membrane ruffles (By similarity).</text>
</comment>
<comment type="subcellular location">
    <subcellularLocation>
        <location evidence="2">Cytoplasm</location>
    </subcellularLocation>
    <subcellularLocation>
        <location evidence="2">Nucleus</location>
    </subcellularLocation>
    <subcellularLocation>
        <location evidence="5">Cytoplasm</location>
        <location evidence="5">Cell cortex</location>
    </subcellularLocation>
    <subcellularLocation>
        <location evidence="5">Cell projection</location>
        <location evidence="5">Ruffle membrane</location>
    </subcellularLocation>
    <subcellularLocation>
        <location evidence="5">Cytoplasmic vesicle</location>
    </subcellularLocation>
    <subcellularLocation>
        <location evidence="4">Cell projection</location>
        <location evidence="4">Stereocilium membrane</location>
    </subcellularLocation>
    <text evidence="2 5">Colocalizes with CABP1 and CIB1 at cell margin, membrane ruffles and punctate regions on the cell membrane (By similarity). Colocalizes in adipocytes with GLUT4 at actin-based membranes (By similarity). Colocalizes with GLUT4 at insulin-induced ruffles at the cell membrane (By similarity). Localizes transiently at cell membrane to region known to be enriched in PIP2 (By similarity). Activation of phospholipase C results in its redistribution to the cytoplasm (By similarity). Colocalizes with RNA polymerase II (By similarity). Translocates to nuclear speckles upon exposure to inhibitors of RNA polymerase II transcription (By similarity).</text>
</comment>
<comment type="subcellular location">
    <molecule>Isoform 3</molecule>
    <subcellularLocation>
        <location evidence="5">Nucleus</location>
        <location evidence="5">Nucleolus</location>
    </subcellularLocation>
    <subcellularLocation>
        <location evidence="5">Nucleus</location>
        <location evidence="5">Nucleoplasm</location>
    </subcellularLocation>
    <text evidence="2 5">Colocalizes with RNA polymerase II in the nucleus (By similarity). Colocalizes with RNA polymerase I in nucleoli (By similarity). In the nucleolus, is localized predominantly in dense fibrillar component (DFC) and in granular component (GC) (By similarity). Accumulates strongly in DFC and GC during activation of transcription (By similarity). Colocalizes with transcription sites (By similarity). Colocalizes in the granular cortex at the periphery of the nucleolus with RPS6 (By similarity). Colocalizes in nucleoplasm with RPS6 and actin that are in contact with RNP particles (By similarity). Colocalizes with RPS6 at the nuclear pore level (By similarity).</text>
</comment>
<comment type="alternative products">
    <event type="alternative splicing"/>
    <isoform>
        <id>Q27966-1</id>
        <name>1</name>
        <sequence type="displayed"/>
    </isoform>
    <isoform>
        <id>Q27966-2</id>
        <name>2</name>
        <sequence type="described" ref="VSP_036860"/>
    </isoform>
    <isoform>
        <id>Q27966-3</id>
        <name>3</name>
        <sequence type="described" ref="VSP_036859"/>
    </isoform>
</comment>
<comment type="tissue specificity">
    <text evidence="10">Widely expressed.</text>
</comment>
<comment type="domain">
    <text evidence="5">Binds directly to large unilamellar vesicles (LUVs) containing phosphatidylinositol 4,5-bisphosphate (PIP2) or inositol 1,4,5-trisphosphate (InsP3). The PIP2-binding site corresponds to the myosin tail domain (PH-like) present in its tail domain (By similarity).</text>
</comment>
<comment type="PTM">
    <text evidence="1">Isoform 2 contains a N-acetylmethionine at position 1.</text>
</comment>
<comment type="similarity">
    <text evidence="13">Belongs to the TRAFAC class myosin-kinesin ATPase superfamily. Myosin family.</text>
</comment>
<comment type="caution">
    <text evidence="13">Represents an unconventional myosin. This protein should not be confused with the conventional myosin-1 (MYH1).</text>
</comment>
<comment type="sequence caution" evidence="13">
    <conflict type="erroneous initiation">
        <sequence resource="EMBL-CDS" id="AAI40535"/>
    </conflict>
</comment>